<name>RRF_SALTY</name>
<keyword id="KW-0963">Cytoplasm</keyword>
<keyword id="KW-0648">Protein biosynthesis</keyword>
<keyword id="KW-1185">Reference proteome</keyword>
<dbReference type="EMBL" id="AE006468">
    <property type="protein sequence ID" value="AAL19183.1"/>
    <property type="molecule type" value="Genomic_DNA"/>
</dbReference>
<dbReference type="RefSeq" id="NP_459224.1">
    <property type="nucleotide sequence ID" value="NC_003197.2"/>
</dbReference>
<dbReference type="RefSeq" id="WP_000622423.1">
    <property type="nucleotide sequence ID" value="NC_003197.2"/>
</dbReference>
<dbReference type="SMR" id="P66738"/>
<dbReference type="STRING" id="99287.STM0219"/>
<dbReference type="PaxDb" id="99287-STM0219"/>
<dbReference type="GeneID" id="1251737"/>
<dbReference type="KEGG" id="stm:STM0219"/>
<dbReference type="PATRIC" id="fig|99287.12.peg.232"/>
<dbReference type="HOGENOM" id="CLU_073981_2_1_6"/>
<dbReference type="OMA" id="FNPMNNG"/>
<dbReference type="PhylomeDB" id="P66738"/>
<dbReference type="BioCyc" id="SENT99287:STM0219-MONOMER"/>
<dbReference type="Proteomes" id="UP000001014">
    <property type="component" value="Chromosome"/>
</dbReference>
<dbReference type="GO" id="GO:0005737">
    <property type="term" value="C:cytoplasm"/>
    <property type="evidence" value="ECO:0000318"/>
    <property type="project" value="GO_Central"/>
</dbReference>
<dbReference type="GO" id="GO:0005829">
    <property type="term" value="C:cytosol"/>
    <property type="evidence" value="ECO:0007669"/>
    <property type="project" value="GOC"/>
</dbReference>
<dbReference type="GO" id="GO:0043023">
    <property type="term" value="F:ribosomal large subunit binding"/>
    <property type="evidence" value="ECO:0000318"/>
    <property type="project" value="GO_Central"/>
</dbReference>
<dbReference type="GO" id="GO:0002184">
    <property type="term" value="P:cytoplasmic translational termination"/>
    <property type="evidence" value="ECO:0000318"/>
    <property type="project" value="GO_Central"/>
</dbReference>
<dbReference type="GO" id="GO:0006412">
    <property type="term" value="P:translation"/>
    <property type="evidence" value="ECO:0000318"/>
    <property type="project" value="GO_Central"/>
</dbReference>
<dbReference type="CDD" id="cd00520">
    <property type="entry name" value="RRF"/>
    <property type="match status" value="1"/>
</dbReference>
<dbReference type="FunFam" id="1.10.132.20:FF:000001">
    <property type="entry name" value="Ribosome-recycling factor"/>
    <property type="match status" value="1"/>
</dbReference>
<dbReference type="FunFam" id="3.30.1360.40:FF:000001">
    <property type="entry name" value="Ribosome-recycling factor"/>
    <property type="match status" value="1"/>
</dbReference>
<dbReference type="Gene3D" id="3.30.1360.40">
    <property type="match status" value="1"/>
</dbReference>
<dbReference type="Gene3D" id="1.10.132.20">
    <property type="entry name" value="Ribosome-recycling factor"/>
    <property type="match status" value="1"/>
</dbReference>
<dbReference type="HAMAP" id="MF_00040">
    <property type="entry name" value="RRF"/>
    <property type="match status" value="1"/>
</dbReference>
<dbReference type="InterPro" id="IPR002661">
    <property type="entry name" value="Ribosome_recyc_fac"/>
</dbReference>
<dbReference type="InterPro" id="IPR023584">
    <property type="entry name" value="Ribosome_recyc_fac_dom"/>
</dbReference>
<dbReference type="InterPro" id="IPR036191">
    <property type="entry name" value="RRF_sf"/>
</dbReference>
<dbReference type="NCBIfam" id="TIGR00496">
    <property type="entry name" value="frr"/>
    <property type="match status" value="1"/>
</dbReference>
<dbReference type="PANTHER" id="PTHR20982:SF3">
    <property type="entry name" value="MITOCHONDRIAL RIBOSOME RECYCLING FACTOR PSEUDO 1"/>
    <property type="match status" value="1"/>
</dbReference>
<dbReference type="PANTHER" id="PTHR20982">
    <property type="entry name" value="RIBOSOME RECYCLING FACTOR"/>
    <property type="match status" value="1"/>
</dbReference>
<dbReference type="Pfam" id="PF01765">
    <property type="entry name" value="RRF"/>
    <property type="match status" value="1"/>
</dbReference>
<dbReference type="SUPFAM" id="SSF55194">
    <property type="entry name" value="Ribosome recycling factor, RRF"/>
    <property type="match status" value="1"/>
</dbReference>
<feature type="chain" id="PRO_0000167534" description="Ribosome-recycling factor">
    <location>
        <begin position="1"/>
        <end position="185"/>
    </location>
</feature>
<evidence type="ECO:0000255" key="1">
    <source>
        <dbReference type="HAMAP-Rule" id="MF_00040"/>
    </source>
</evidence>
<sequence length="185" mass="20556">MISDIRKDAEVRMEKCVEAFKTQISKVRTGRASPSLLDGIVVEYYGTPTPLRQLASVTVEDSRTLKINVFDRSMGPAVEKAIMASDLGLNPSSAGTDIRVPLPPLTEERRKDLTKIVRGEAEQARVAVRNVRRDANDKVKALLKDKAISEDDDRRSQEEVQKMTDAAIKKVDAALADKEAELMQF</sequence>
<gene>
    <name evidence="1" type="primary">frr</name>
    <name type="synonym">rrf</name>
    <name type="ordered locus">STM0219</name>
</gene>
<comment type="function">
    <text evidence="1">Responsible for the release of ribosomes from messenger RNA at the termination of protein biosynthesis. May increase the efficiency of translation by recycling ribosomes from one round of translation to another.</text>
</comment>
<comment type="subcellular location">
    <subcellularLocation>
        <location evidence="1">Cytoplasm</location>
    </subcellularLocation>
</comment>
<comment type="similarity">
    <text evidence="1">Belongs to the RRF family.</text>
</comment>
<protein>
    <recommendedName>
        <fullName evidence="1">Ribosome-recycling factor</fullName>
        <shortName evidence="1">RRF</shortName>
    </recommendedName>
    <alternativeName>
        <fullName evidence="1">Ribosome-releasing factor</fullName>
    </alternativeName>
</protein>
<accession>P66738</accession>
<accession>Q8XF57</accession>
<proteinExistence type="inferred from homology"/>
<organism>
    <name type="scientific">Salmonella typhimurium (strain LT2 / SGSC1412 / ATCC 700720)</name>
    <dbReference type="NCBI Taxonomy" id="99287"/>
    <lineage>
        <taxon>Bacteria</taxon>
        <taxon>Pseudomonadati</taxon>
        <taxon>Pseudomonadota</taxon>
        <taxon>Gammaproteobacteria</taxon>
        <taxon>Enterobacterales</taxon>
        <taxon>Enterobacteriaceae</taxon>
        <taxon>Salmonella</taxon>
    </lineage>
</organism>
<reference key="1">
    <citation type="journal article" date="2001" name="Nature">
        <title>Complete genome sequence of Salmonella enterica serovar Typhimurium LT2.</title>
        <authorList>
            <person name="McClelland M."/>
            <person name="Sanderson K.E."/>
            <person name="Spieth J."/>
            <person name="Clifton S.W."/>
            <person name="Latreille P."/>
            <person name="Courtney L."/>
            <person name="Porwollik S."/>
            <person name="Ali J."/>
            <person name="Dante M."/>
            <person name="Du F."/>
            <person name="Hou S."/>
            <person name="Layman D."/>
            <person name="Leonard S."/>
            <person name="Nguyen C."/>
            <person name="Scott K."/>
            <person name="Holmes A."/>
            <person name="Grewal N."/>
            <person name="Mulvaney E."/>
            <person name="Ryan E."/>
            <person name="Sun H."/>
            <person name="Florea L."/>
            <person name="Miller W."/>
            <person name="Stoneking T."/>
            <person name="Nhan M."/>
            <person name="Waterston R."/>
            <person name="Wilson R.K."/>
        </authorList>
    </citation>
    <scope>NUCLEOTIDE SEQUENCE [LARGE SCALE GENOMIC DNA]</scope>
    <source>
        <strain>LT2 / SGSC1412 / ATCC 700720</strain>
    </source>
</reference>